<name>ATPB_ENTHA</name>
<comment type="function">
    <text evidence="1">Produces ATP from ADP in the presence of a proton gradient across the membrane. The catalytic sites are hosted primarily by the beta subunits.</text>
</comment>
<comment type="catalytic activity">
    <reaction evidence="1">
        <text>ATP + H2O + 4 H(+)(in) = ADP + phosphate + 5 H(+)(out)</text>
        <dbReference type="Rhea" id="RHEA:57720"/>
        <dbReference type="ChEBI" id="CHEBI:15377"/>
        <dbReference type="ChEBI" id="CHEBI:15378"/>
        <dbReference type="ChEBI" id="CHEBI:30616"/>
        <dbReference type="ChEBI" id="CHEBI:43474"/>
        <dbReference type="ChEBI" id="CHEBI:456216"/>
        <dbReference type="EC" id="7.1.2.2"/>
    </reaction>
</comment>
<comment type="subunit">
    <text evidence="1">F-type ATPases have 2 components, CF(1) - the catalytic core - and CF(0) - the membrane proton channel. CF(1) has five subunits: alpha(3), beta(3), gamma(1), delta(1), epsilon(1). CF(0) has three main subunits: a(1), b(2) and c(9-12). The alpha and beta chains form an alternating ring which encloses part of the gamma chain. CF(1) is attached to CF(0) by a central stalk formed by the gamma and epsilon chains, while a peripheral stalk is formed by the delta and b chains.</text>
</comment>
<comment type="subcellular location">
    <subcellularLocation>
        <location evidence="1">Cell membrane</location>
        <topology evidence="1">Peripheral membrane protein</topology>
    </subcellularLocation>
</comment>
<comment type="similarity">
    <text evidence="1">Belongs to the ATPase alpha/beta chains family.</text>
</comment>
<dbReference type="EC" id="7.1.2.2" evidence="1"/>
<dbReference type="EMBL" id="M90060">
    <property type="protein sequence ID" value="AAA26859.1"/>
    <property type="molecule type" value="Genomic_DNA"/>
</dbReference>
<dbReference type="EMBL" id="CP003504">
    <property type="protein sequence ID" value="AFM70625.1"/>
    <property type="molecule type" value="Genomic_DNA"/>
</dbReference>
<dbReference type="RefSeq" id="WP_010718594.1">
    <property type="nucleotide sequence ID" value="NZ_KB946231.1"/>
</dbReference>
<dbReference type="SMR" id="P43451"/>
<dbReference type="GeneID" id="56786977"/>
<dbReference type="KEGG" id="ehr:EHR_08500"/>
<dbReference type="eggNOG" id="COG0055">
    <property type="taxonomic scope" value="Bacteria"/>
</dbReference>
<dbReference type="HOGENOM" id="CLU_022398_0_2_9"/>
<dbReference type="OrthoDB" id="9801639at2"/>
<dbReference type="Proteomes" id="UP000002895">
    <property type="component" value="Chromosome"/>
</dbReference>
<dbReference type="GO" id="GO:0005886">
    <property type="term" value="C:plasma membrane"/>
    <property type="evidence" value="ECO:0007669"/>
    <property type="project" value="UniProtKB-SubCell"/>
</dbReference>
<dbReference type="GO" id="GO:0045259">
    <property type="term" value="C:proton-transporting ATP synthase complex"/>
    <property type="evidence" value="ECO:0007669"/>
    <property type="project" value="UniProtKB-KW"/>
</dbReference>
<dbReference type="GO" id="GO:0005524">
    <property type="term" value="F:ATP binding"/>
    <property type="evidence" value="ECO:0007669"/>
    <property type="project" value="UniProtKB-UniRule"/>
</dbReference>
<dbReference type="GO" id="GO:0016887">
    <property type="term" value="F:ATP hydrolysis activity"/>
    <property type="evidence" value="ECO:0007669"/>
    <property type="project" value="InterPro"/>
</dbReference>
<dbReference type="GO" id="GO:0046933">
    <property type="term" value="F:proton-transporting ATP synthase activity, rotational mechanism"/>
    <property type="evidence" value="ECO:0007669"/>
    <property type="project" value="UniProtKB-UniRule"/>
</dbReference>
<dbReference type="CDD" id="cd18110">
    <property type="entry name" value="ATP-synt_F1_beta_C"/>
    <property type="match status" value="1"/>
</dbReference>
<dbReference type="CDD" id="cd18115">
    <property type="entry name" value="ATP-synt_F1_beta_N"/>
    <property type="match status" value="1"/>
</dbReference>
<dbReference type="CDD" id="cd01133">
    <property type="entry name" value="F1-ATPase_beta_CD"/>
    <property type="match status" value="1"/>
</dbReference>
<dbReference type="FunFam" id="1.10.1140.10:FF:000001">
    <property type="entry name" value="ATP synthase subunit beta"/>
    <property type="match status" value="1"/>
</dbReference>
<dbReference type="FunFam" id="2.40.10.170:FF:000005">
    <property type="entry name" value="ATP synthase subunit beta"/>
    <property type="match status" value="1"/>
</dbReference>
<dbReference type="FunFam" id="3.40.50.300:FF:000004">
    <property type="entry name" value="ATP synthase subunit beta"/>
    <property type="match status" value="1"/>
</dbReference>
<dbReference type="Gene3D" id="2.40.10.170">
    <property type="match status" value="1"/>
</dbReference>
<dbReference type="Gene3D" id="1.10.1140.10">
    <property type="entry name" value="Bovine Mitochondrial F1-atpase, Atp Synthase Beta Chain, Chain D, domain 3"/>
    <property type="match status" value="1"/>
</dbReference>
<dbReference type="Gene3D" id="3.40.50.300">
    <property type="entry name" value="P-loop containing nucleotide triphosphate hydrolases"/>
    <property type="match status" value="1"/>
</dbReference>
<dbReference type="HAMAP" id="MF_01347">
    <property type="entry name" value="ATP_synth_beta_bact"/>
    <property type="match status" value="1"/>
</dbReference>
<dbReference type="InterPro" id="IPR003593">
    <property type="entry name" value="AAA+_ATPase"/>
</dbReference>
<dbReference type="InterPro" id="IPR055190">
    <property type="entry name" value="ATP-synt_VA_C"/>
</dbReference>
<dbReference type="InterPro" id="IPR005722">
    <property type="entry name" value="ATP_synth_F1_bsu"/>
</dbReference>
<dbReference type="InterPro" id="IPR020003">
    <property type="entry name" value="ATPase_a/bsu_AS"/>
</dbReference>
<dbReference type="InterPro" id="IPR050053">
    <property type="entry name" value="ATPase_alpha/beta_chains"/>
</dbReference>
<dbReference type="InterPro" id="IPR004100">
    <property type="entry name" value="ATPase_F1/V1/A1_a/bsu_N"/>
</dbReference>
<dbReference type="InterPro" id="IPR036121">
    <property type="entry name" value="ATPase_F1/V1/A1_a/bsu_N_sf"/>
</dbReference>
<dbReference type="InterPro" id="IPR000194">
    <property type="entry name" value="ATPase_F1/V1/A1_a/bsu_nucl-bd"/>
</dbReference>
<dbReference type="InterPro" id="IPR024034">
    <property type="entry name" value="ATPase_F1/V1_b/a_C"/>
</dbReference>
<dbReference type="InterPro" id="IPR027417">
    <property type="entry name" value="P-loop_NTPase"/>
</dbReference>
<dbReference type="NCBIfam" id="TIGR01039">
    <property type="entry name" value="atpD"/>
    <property type="match status" value="1"/>
</dbReference>
<dbReference type="PANTHER" id="PTHR15184">
    <property type="entry name" value="ATP SYNTHASE"/>
    <property type="match status" value="1"/>
</dbReference>
<dbReference type="PANTHER" id="PTHR15184:SF71">
    <property type="entry name" value="ATP SYNTHASE SUBUNIT BETA, MITOCHONDRIAL"/>
    <property type="match status" value="1"/>
</dbReference>
<dbReference type="Pfam" id="PF00006">
    <property type="entry name" value="ATP-synt_ab"/>
    <property type="match status" value="1"/>
</dbReference>
<dbReference type="Pfam" id="PF02874">
    <property type="entry name" value="ATP-synt_ab_N"/>
    <property type="match status" value="1"/>
</dbReference>
<dbReference type="Pfam" id="PF22919">
    <property type="entry name" value="ATP-synt_VA_C"/>
    <property type="match status" value="1"/>
</dbReference>
<dbReference type="SMART" id="SM00382">
    <property type="entry name" value="AAA"/>
    <property type="match status" value="1"/>
</dbReference>
<dbReference type="SUPFAM" id="SSF47917">
    <property type="entry name" value="C-terminal domain of alpha and beta subunits of F1 ATP synthase"/>
    <property type="match status" value="1"/>
</dbReference>
<dbReference type="SUPFAM" id="SSF50615">
    <property type="entry name" value="N-terminal domain of alpha and beta subunits of F1 ATP synthase"/>
    <property type="match status" value="1"/>
</dbReference>
<dbReference type="SUPFAM" id="SSF52540">
    <property type="entry name" value="P-loop containing nucleoside triphosphate hydrolases"/>
    <property type="match status" value="1"/>
</dbReference>
<dbReference type="PROSITE" id="PS00152">
    <property type="entry name" value="ATPASE_ALPHA_BETA"/>
    <property type="match status" value="1"/>
</dbReference>
<organism>
    <name type="scientific">Enterococcus hirae (strain ATCC 9790 / DSM 20160 / JCM 8729 / LMG 6399 / NBRC 3181 / NCIMB 6459 / NCDO 1258 / NCTC 12367 / WDCM 00089 / R)</name>
    <dbReference type="NCBI Taxonomy" id="768486"/>
    <lineage>
        <taxon>Bacteria</taxon>
        <taxon>Bacillati</taxon>
        <taxon>Bacillota</taxon>
        <taxon>Bacilli</taxon>
        <taxon>Lactobacillales</taxon>
        <taxon>Enterococcaceae</taxon>
        <taxon>Enterococcus</taxon>
    </lineage>
</organism>
<evidence type="ECO:0000255" key="1">
    <source>
        <dbReference type="HAMAP-Rule" id="MF_01347"/>
    </source>
</evidence>
<reference key="1">
    <citation type="journal article" date="1992" name="J. Bacteriol.">
        <title>Gene structure of Enterococcus hirae (Streptococcus faecalis) F1F0-ATPase, which functions as a regulator of cytoplasmic pH.</title>
        <authorList>
            <person name="Shibata C."/>
            <person name="Ehara T."/>
            <person name="Tomura K."/>
            <person name="Igarashi K."/>
            <person name="Kobayashi H."/>
        </authorList>
    </citation>
    <scope>NUCLEOTIDE SEQUENCE [GENOMIC DNA]</scope>
    <source>
        <strain>ATCC 9790 / DSM 20160 / JCM 8729 / LMG 6399 / NBRC 3181 / NCIMB 6459 / NCDO 1258 / NCTC 12367 / WDCM 00089 / R</strain>
    </source>
</reference>
<reference key="2">
    <citation type="journal article" date="2012" name="J. Bacteriol.">
        <title>Genome sequence of Enterococcus hirae (Streptococcus faecalis) ATCC 9790, a model organism for the study of ion transport, bioenergetics, and copper homeostasis.</title>
        <authorList>
            <person name="Gaechter T."/>
            <person name="Wunderlin C."/>
            <person name="Schmidheini T."/>
            <person name="Solioz M."/>
        </authorList>
    </citation>
    <scope>NUCLEOTIDE SEQUENCE [LARGE SCALE GENOMIC DNA]</scope>
    <source>
        <strain>ATCC 9790 / DSM 20160 / JCM 8729 / LMG 6399 / NBRC 3181 / NCIMB 6459 / NCDO 1258 / NCTC 12367 / WDCM 00089 / R</strain>
    </source>
</reference>
<proteinExistence type="inferred from homology"/>
<sequence>MSSGKIVQVIGPVVDVEFSLDQSLPDINNALVVYKNDEKKSKVVLETALELGDGVIRTIAMESTDGLQRGMEVIDTGKAISVPVGKDTLGRVFNVLGDTIDLGSSFPEDAERSEIHKKAPSFDELSTSTEILETGIKVIDLLAPYLKGGKVGLFGGAGVGKTVLIQELIHNIAQEHGGISVFTGVGERTREGNDLYYEMKDSGVIEKTAMVFGQMNEPPGARMRVALTGLTIAEYFRDVEGQDVLLFIDNIFRFTQAGSEVSALLGRMPSAVGYQPTLATEMGQLQERITSTKKGSITSIQAIYVPADDYTDPAPATAFAHLDATTNLERKLTEQGIYPAVDPLASSSSALAPEIVGEEHYKVATEVQHVLQRYRELQDIIAILGMDELSDQEKVLVSRARRVQFFLSQNFNVAEQFTGLPGSYVPVEETVKGFREILEGKYDDLPEEAFRSVGRIEDVVEKAKKLGY</sequence>
<accession>P43451</accession>
<accession>I6S1U0</accession>
<keyword id="KW-0066">ATP synthesis</keyword>
<keyword id="KW-0067">ATP-binding</keyword>
<keyword id="KW-1003">Cell membrane</keyword>
<keyword id="KW-0139">CF(1)</keyword>
<keyword id="KW-0375">Hydrogen ion transport</keyword>
<keyword id="KW-0406">Ion transport</keyword>
<keyword id="KW-0472">Membrane</keyword>
<keyword id="KW-0547">Nucleotide-binding</keyword>
<keyword id="KW-1278">Translocase</keyword>
<keyword id="KW-0813">Transport</keyword>
<feature type="chain" id="PRO_0000144440" description="ATP synthase subunit beta">
    <location>
        <begin position="1"/>
        <end position="468"/>
    </location>
</feature>
<feature type="binding site" evidence="1">
    <location>
        <begin position="155"/>
        <end position="162"/>
    </location>
    <ligand>
        <name>ATP</name>
        <dbReference type="ChEBI" id="CHEBI:30616"/>
    </ligand>
</feature>
<gene>
    <name evidence="1" type="primary">atpD</name>
    <name type="ordered locus">EHR_08500</name>
</gene>
<protein>
    <recommendedName>
        <fullName evidence="1">ATP synthase subunit beta</fullName>
        <ecNumber evidence="1">7.1.2.2</ecNumber>
    </recommendedName>
    <alternativeName>
        <fullName evidence="1">ATP synthase F1 sector subunit beta</fullName>
    </alternativeName>
    <alternativeName>
        <fullName evidence="1">F-ATPase subunit beta</fullName>
    </alternativeName>
</protein>